<accession>Q30Y14</accession>
<reference key="1">
    <citation type="journal article" date="2011" name="J. Bacteriol.">
        <title>Complete genome sequence and updated annotation of Desulfovibrio alaskensis G20.</title>
        <authorList>
            <person name="Hauser L.J."/>
            <person name="Land M.L."/>
            <person name="Brown S.D."/>
            <person name="Larimer F."/>
            <person name="Keller K.L."/>
            <person name="Rapp-Giles B.J."/>
            <person name="Price M.N."/>
            <person name="Lin M."/>
            <person name="Bruce D.C."/>
            <person name="Detter J.C."/>
            <person name="Tapia R."/>
            <person name="Han C.S."/>
            <person name="Goodwin L.A."/>
            <person name="Cheng J.F."/>
            <person name="Pitluck S."/>
            <person name="Copeland A."/>
            <person name="Lucas S."/>
            <person name="Nolan M."/>
            <person name="Lapidus A.L."/>
            <person name="Palumbo A.V."/>
            <person name="Wall J.D."/>
        </authorList>
    </citation>
    <scope>NUCLEOTIDE SEQUENCE [LARGE SCALE GENOMIC DNA]</scope>
    <source>
        <strain>ATCC BAA-1058 / DSM 17464 / G20</strain>
    </source>
</reference>
<dbReference type="EMBL" id="CP000112">
    <property type="protein sequence ID" value="ABB39432.1"/>
    <property type="molecule type" value="Genomic_DNA"/>
</dbReference>
<dbReference type="RefSeq" id="WP_011368468.1">
    <property type="nucleotide sequence ID" value="NC_007519.1"/>
</dbReference>
<dbReference type="SMR" id="Q30Y14"/>
<dbReference type="STRING" id="207559.Dde_2636"/>
<dbReference type="KEGG" id="dde:Dde_2636"/>
<dbReference type="eggNOG" id="COG0292">
    <property type="taxonomic scope" value="Bacteria"/>
</dbReference>
<dbReference type="HOGENOM" id="CLU_123265_0_1_7"/>
<dbReference type="Proteomes" id="UP000002710">
    <property type="component" value="Chromosome"/>
</dbReference>
<dbReference type="GO" id="GO:1990904">
    <property type="term" value="C:ribonucleoprotein complex"/>
    <property type="evidence" value="ECO:0007669"/>
    <property type="project" value="UniProtKB-KW"/>
</dbReference>
<dbReference type="GO" id="GO:0005840">
    <property type="term" value="C:ribosome"/>
    <property type="evidence" value="ECO:0007669"/>
    <property type="project" value="UniProtKB-KW"/>
</dbReference>
<dbReference type="GO" id="GO:0019843">
    <property type="term" value="F:rRNA binding"/>
    <property type="evidence" value="ECO:0007669"/>
    <property type="project" value="UniProtKB-UniRule"/>
</dbReference>
<dbReference type="GO" id="GO:0003735">
    <property type="term" value="F:structural constituent of ribosome"/>
    <property type="evidence" value="ECO:0007669"/>
    <property type="project" value="InterPro"/>
</dbReference>
<dbReference type="GO" id="GO:0000027">
    <property type="term" value="P:ribosomal large subunit assembly"/>
    <property type="evidence" value="ECO:0007669"/>
    <property type="project" value="UniProtKB-UniRule"/>
</dbReference>
<dbReference type="GO" id="GO:0006412">
    <property type="term" value="P:translation"/>
    <property type="evidence" value="ECO:0007669"/>
    <property type="project" value="InterPro"/>
</dbReference>
<dbReference type="CDD" id="cd07026">
    <property type="entry name" value="Ribosomal_L20"/>
    <property type="match status" value="1"/>
</dbReference>
<dbReference type="FunFam" id="1.10.1900.20:FF:000001">
    <property type="entry name" value="50S ribosomal protein L20"/>
    <property type="match status" value="1"/>
</dbReference>
<dbReference type="Gene3D" id="6.10.160.10">
    <property type="match status" value="1"/>
</dbReference>
<dbReference type="Gene3D" id="1.10.1900.20">
    <property type="entry name" value="Ribosomal protein L20"/>
    <property type="match status" value="1"/>
</dbReference>
<dbReference type="HAMAP" id="MF_00382">
    <property type="entry name" value="Ribosomal_bL20"/>
    <property type="match status" value="1"/>
</dbReference>
<dbReference type="InterPro" id="IPR005813">
    <property type="entry name" value="Ribosomal_bL20"/>
</dbReference>
<dbReference type="InterPro" id="IPR049946">
    <property type="entry name" value="RIBOSOMAL_L20_CS"/>
</dbReference>
<dbReference type="InterPro" id="IPR035566">
    <property type="entry name" value="Ribosomal_protein_bL20_C"/>
</dbReference>
<dbReference type="NCBIfam" id="TIGR01032">
    <property type="entry name" value="rplT_bact"/>
    <property type="match status" value="1"/>
</dbReference>
<dbReference type="PANTHER" id="PTHR10986">
    <property type="entry name" value="39S RIBOSOMAL PROTEIN L20"/>
    <property type="match status" value="1"/>
</dbReference>
<dbReference type="Pfam" id="PF00453">
    <property type="entry name" value="Ribosomal_L20"/>
    <property type="match status" value="1"/>
</dbReference>
<dbReference type="PRINTS" id="PR00062">
    <property type="entry name" value="RIBOSOMALL20"/>
</dbReference>
<dbReference type="SUPFAM" id="SSF74731">
    <property type="entry name" value="Ribosomal protein L20"/>
    <property type="match status" value="1"/>
</dbReference>
<dbReference type="PROSITE" id="PS00937">
    <property type="entry name" value="RIBOSOMAL_L20"/>
    <property type="match status" value="1"/>
</dbReference>
<name>RL20_OLEA2</name>
<sequence length="117" mass="13646">MRVKRGMATHRRHKKYLKMAKGYRGGRSKLYRTAREAVERSLAYSTRDRKVRKREFRKLWILRINAAARENGVSYSKFIHGLALAGIELNRKVLADLAVREKEDFAKLAELVKSKLS</sequence>
<proteinExistence type="inferred from homology"/>
<feature type="chain" id="PRO_0000243677" description="Large ribosomal subunit protein bL20">
    <location>
        <begin position="1"/>
        <end position="117"/>
    </location>
</feature>
<keyword id="KW-1185">Reference proteome</keyword>
<keyword id="KW-0687">Ribonucleoprotein</keyword>
<keyword id="KW-0689">Ribosomal protein</keyword>
<keyword id="KW-0694">RNA-binding</keyword>
<keyword id="KW-0699">rRNA-binding</keyword>
<protein>
    <recommendedName>
        <fullName evidence="1">Large ribosomal subunit protein bL20</fullName>
    </recommendedName>
    <alternativeName>
        <fullName evidence="2">50S ribosomal protein L20</fullName>
    </alternativeName>
</protein>
<organism>
    <name type="scientific">Oleidesulfovibrio alaskensis (strain ATCC BAA-1058 / DSM 17464 / G20)</name>
    <name type="common">Desulfovibrio alaskensis</name>
    <dbReference type="NCBI Taxonomy" id="207559"/>
    <lineage>
        <taxon>Bacteria</taxon>
        <taxon>Pseudomonadati</taxon>
        <taxon>Thermodesulfobacteriota</taxon>
        <taxon>Desulfovibrionia</taxon>
        <taxon>Desulfovibrionales</taxon>
        <taxon>Desulfovibrionaceae</taxon>
        <taxon>Oleidesulfovibrio</taxon>
    </lineage>
</organism>
<gene>
    <name evidence="1" type="primary">rplT</name>
    <name type="ordered locus">Dde_2636</name>
</gene>
<evidence type="ECO:0000255" key="1">
    <source>
        <dbReference type="HAMAP-Rule" id="MF_00382"/>
    </source>
</evidence>
<evidence type="ECO:0000305" key="2"/>
<comment type="function">
    <text evidence="1">Binds directly to 23S ribosomal RNA and is necessary for the in vitro assembly process of the 50S ribosomal subunit. It is not involved in the protein synthesizing functions of that subunit.</text>
</comment>
<comment type="similarity">
    <text evidence="1">Belongs to the bacterial ribosomal protein bL20 family.</text>
</comment>